<evidence type="ECO:0000255" key="1">
    <source>
        <dbReference type="HAMAP-Rule" id="MF_00659"/>
    </source>
</evidence>
<protein>
    <recommendedName>
        <fullName evidence="1">UPF0250 protein SG0794</fullName>
    </recommendedName>
</protein>
<accession>Q2NUV6</accession>
<proteinExistence type="inferred from homology"/>
<sequence>MKTKLNELLEFPCPFTYKVMGIAQPELVDQVVEVVQRHAPGDYSPQVKPSSKGNYHSVSITITATHIEQVETLYEELGKIDIVRMVL</sequence>
<dbReference type="EMBL" id="AP008232">
    <property type="protein sequence ID" value="BAE74069.1"/>
    <property type="molecule type" value="Genomic_DNA"/>
</dbReference>
<dbReference type="RefSeq" id="WP_011410657.1">
    <property type="nucleotide sequence ID" value="NC_007712.1"/>
</dbReference>
<dbReference type="SMR" id="Q2NUV6"/>
<dbReference type="STRING" id="343509.SG0794"/>
<dbReference type="KEGG" id="sgl:SG0794"/>
<dbReference type="eggNOG" id="COG2921">
    <property type="taxonomic scope" value="Bacteria"/>
</dbReference>
<dbReference type="HOGENOM" id="CLU_161438_2_1_6"/>
<dbReference type="OrthoDB" id="9793424at2"/>
<dbReference type="BioCyc" id="SGLO343509:SGP1_RS07010-MONOMER"/>
<dbReference type="Proteomes" id="UP000001932">
    <property type="component" value="Chromosome"/>
</dbReference>
<dbReference type="GO" id="GO:0005829">
    <property type="term" value="C:cytosol"/>
    <property type="evidence" value="ECO:0007669"/>
    <property type="project" value="TreeGrafter"/>
</dbReference>
<dbReference type="FunFam" id="3.30.70.260:FF:000002">
    <property type="entry name" value="UPF0250 protein YbeD"/>
    <property type="match status" value="1"/>
</dbReference>
<dbReference type="Gene3D" id="3.30.70.260">
    <property type="match status" value="1"/>
</dbReference>
<dbReference type="HAMAP" id="MF_00659">
    <property type="entry name" value="UPF0250"/>
    <property type="match status" value="1"/>
</dbReference>
<dbReference type="InterPro" id="IPR007454">
    <property type="entry name" value="UPF0250_YbeD-like"/>
</dbReference>
<dbReference type="InterPro" id="IPR027471">
    <property type="entry name" value="YbeD-like_sf"/>
</dbReference>
<dbReference type="NCBIfam" id="NF003447">
    <property type="entry name" value="PRK04998.1"/>
    <property type="match status" value="1"/>
</dbReference>
<dbReference type="PANTHER" id="PTHR38036">
    <property type="entry name" value="UPF0250 PROTEIN YBED"/>
    <property type="match status" value="1"/>
</dbReference>
<dbReference type="PANTHER" id="PTHR38036:SF1">
    <property type="entry name" value="UPF0250 PROTEIN YBED"/>
    <property type="match status" value="1"/>
</dbReference>
<dbReference type="Pfam" id="PF04359">
    <property type="entry name" value="DUF493"/>
    <property type="match status" value="1"/>
</dbReference>
<dbReference type="SUPFAM" id="SSF117991">
    <property type="entry name" value="YbeD/HP0495-like"/>
    <property type="match status" value="1"/>
</dbReference>
<feature type="chain" id="PRO_1000061903" description="UPF0250 protein SG0794">
    <location>
        <begin position="1"/>
        <end position="87"/>
    </location>
</feature>
<organism>
    <name type="scientific">Sodalis glossinidius (strain morsitans)</name>
    <dbReference type="NCBI Taxonomy" id="343509"/>
    <lineage>
        <taxon>Bacteria</taxon>
        <taxon>Pseudomonadati</taxon>
        <taxon>Pseudomonadota</taxon>
        <taxon>Gammaproteobacteria</taxon>
        <taxon>Enterobacterales</taxon>
        <taxon>Bruguierivoracaceae</taxon>
        <taxon>Sodalis</taxon>
    </lineage>
</organism>
<gene>
    <name type="ordered locus">SG0794</name>
</gene>
<reference key="1">
    <citation type="journal article" date="2006" name="Genome Res.">
        <title>Massive genome erosion and functional adaptations provide insights into the symbiotic lifestyle of Sodalis glossinidius in the tsetse host.</title>
        <authorList>
            <person name="Toh H."/>
            <person name="Weiss B.L."/>
            <person name="Perkin S.A.H."/>
            <person name="Yamashita A."/>
            <person name="Oshima K."/>
            <person name="Hattori M."/>
            <person name="Aksoy S."/>
        </authorList>
    </citation>
    <scope>NUCLEOTIDE SEQUENCE [LARGE SCALE GENOMIC DNA]</scope>
    <source>
        <strain>morsitans</strain>
    </source>
</reference>
<name>Y794_SODGM</name>
<comment type="similarity">
    <text evidence="1">Belongs to the UPF0250 family.</text>
</comment>